<proteinExistence type="inferred from homology"/>
<name>FLPA_HALMA</name>
<evidence type="ECO:0000255" key="1">
    <source>
        <dbReference type="HAMAP-Rule" id="MF_00351"/>
    </source>
</evidence>
<evidence type="ECO:0000256" key="2">
    <source>
        <dbReference type="SAM" id="MobiDB-lite"/>
    </source>
</evidence>
<accession>Q5V3Q6</accession>
<protein>
    <recommendedName>
        <fullName evidence="1">Fibrillarin-like rRNA/tRNA 2'-O-methyltransferase</fullName>
        <ecNumber evidence="1">2.1.1.-</ecNumber>
    </recommendedName>
</protein>
<keyword id="KW-0489">Methyltransferase</keyword>
<keyword id="KW-1185">Reference proteome</keyword>
<keyword id="KW-0694">RNA-binding</keyword>
<keyword id="KW-0698">rRNA processing</keyword>
<keyword id="KW-0808">Transferase</keyword>
<keyword id="KW-0819">tRNA processing</keyword>
<gene>
    <name evidence="1" type="primary">flpA</name>
    <name type="synonym">fib</name>
    <name type="ordered locus">rrnAC0865</name>
</gene>
<comment type="function">
    <text evidence="1">Involved in pre-rRNA and tRNA processing. Utilizes the methyl donor S-adenosyl-L-methionine to catalyze the site-specific 2'-hydroxyl methylation of ribose moieties in rRNA and tRNA. Site specificity is provided by a guide RNA that base pairs with the substrate. Methylation occurs at a characteristic distance from the sequence involved in base pairing with the guide RNA.</text>
</comment>
<comment type="subunit">
    <text evidence="1">Interacts with nop5. Component of box C/D small ribonucleoprotein (sRNP) particles that contain rpl7ae, FlpA and nop5, plus a guide RNA.</text>
</comment>
<comment type="similarity">
    <text evidence="1">Belongs to the methyltransferase superfamily. Fibrillarin family.</text>
</comment>
<reference key="1">
    <citation type="journal article" date="2004" name="Genome Res.">
        <title>Genome sequence of Haloarcula marismortui: a halophilic archaeon from the Dead Sea.</title>
        <authorList>
            <person name="Baliga N.S."/>
            <person name="Bonneau R."/>
            <person name="Facciotti M.T."/>
            <person name="Pan M."/>
            <person name="Glusman G."/>
            <person name="Deutsch E.W."/>
            <person name="Shannon P."/>
            <person name="Chiu Y."/>
            <person name="Weng R.S."/>
            <person name="Gan R.R."/>
            <person name="Hung P."/>
            <person name="Date S.V."/>
            <person name="Marcotte E."/>
            <person name="Hood L."/>
            <person name="Ng W.V."/>
        </authorList>
    </citation>
    <scope>NUCLEOTIDE SEQUENCE [LARGE SCALE GENOMIC DNA]</scope>
    <source>
        <strain>ATCC 43049 / DSM 3752 / JCM 8966 / VKM B-1809</strain>
    </source>
</reference>
<dbReference type="EC" id="2.1.1.-" evidence="1"/>
<dbReference type="EMBL" id="AY596297">
    <property type="protein sequence ID" value="AAV45846.1"/>
    <property type="molecule type" value="Genomic_DNA"/>
</dbReference>
<dbReference type="RefSeq" id="WP_011223285.1">
    <property type="nucleotide sequence ID" value="NC_006396.1"/>
</dbReference>
<dbReference type="SMR" id="Q5V3Q6"/>
<dbReference type="STRING" id="272569.rrnAC0865"/>
<dbReference type="PaxDb" id="272569-rrnAC0865"/>
<dbReference type="EnsemblBacteria" id="AAV45846">
    <property type="protein sequence ID" value="AAV45846"/>
    <property type="gene ID" value="rrnAC0865"/>
</dbReference>
<dbReference type="GeneID" id="40151890"/>
<dbReference type="KEGG" id="hma:rrnAC0865"/>
<dbReference type="PATRIC" id="fig|272569.17.peg.1604"/>
<dbReference type="eggNOG" id="arCOG00078">
    <property type="taxonomic scope" value="Archaea"/>
</dbReference>
<dbReference type="HOGENOM" id="CLU_059055_2_0_2"/>
<dbReference type="Proteomes" id="UP000001169">
    <property type="component" value="Chromosome I"/>
</dbReference>
<dbReference type="GO" id="GO:1990259">
    <property type="term" value="F:histone H2AQ104 methyltransferase activity"/>
    <property type="evidence" value="ECO:0007669"/>
    <property type="project" value="TreeGrafter"/>
</dbReference>
<dbReference type="GO" id="GO:0003723">
    <property type="term" value="F:RNA binding"/>
    <property type="evidence" value="ECO:0007669"/>
    <property type="project" value="UniProtKB-UniRule"/>
</dbReference>
<dbReference type="GO" id="GO:0008649">
    <property type="term" value="F:rRNA methyltransferase activity"/>
    <property type="evidence" value="ECO:0007669"/>
    <property type="project" value="TreeGrafter"/>
</dbReference>
<dbReference type="GO" id="GO:0000494">
    <property type="term" value="P:box C/D sno(s)RNA 3'-end processing"/>
    <property type="evidence" value="ECO:0007669"/>
    <property type="project" value="TreeGrafter"/>
</dbReference>
<dbReference type="GO" id="GO:0008033">
    <property type="term" value="P:tRNA processing"/>
    <property type="evidence" value="ECO:0007669"/>
    <property type="project" value="UniProtKB-UniRule"/>
</dbReference>
<dbReference type="Gene3D" id="3.40.50.150">
    <property type="entry name" value="Vaccinia Virus protein VP39"/>
    <property type="match status" value="1"/>
</dbReference>
<dbReference type="HAMAP" id="MF_00351">
    <property type="entry name" value="RNA_methyltransf_FlpA"/>
    <property type="match status" value="1"/>
</dbReference>
<dbReference type="InterPro" id="IPR000692">
    <property type="entry name" value="Fibrillarin"/>
</dbReference>
<dbReference type="InterPro" id="IPR020813">
    <property type="entry name" value="Fibrillarin_CS"/>
</dbReference>
<dbReference type="InterPro" id="IPR029063">
    <property type="entry name" value="SAM-dependent_MTases_sf"/>
</dbReference>
<dbReference type="NCBIfam" id="NF003276">
    <property type="entry name" value="PRK04266.1-2"/>
    <property type="match status" value="1"/>
</dbReference>
<dbReference type="NCBIfam" id="NF003278">
    <property type="entry name" value="PRK04266.1-4"/>
    <property type="match status" value="1"/>
</dbReference>
<dbReference type="PANTHER" id="PTHR10335:SF17">
    <property type="entry name" value="FIBRILLARIN"/>
    <property type="match status" value="1"/>
</dbReference>
<dbReference type="PANTHER" id="PTHR10335">
    <property type="entry name" value="RRNA 2-O-METHYLTRANSFERASE FIBRILLARIN"/>
    <property type="match status" value="1"/>
</dbReference>
<dbReference type="Pfam" id="PF01269">
    <property type="entry name" value="Fibrillarin"/>
    <property type="match status" value="1"/>
</dbReference>
<dbReference type="PIRSF" id="PIRSF006540">
    <property type="entry name" value="Nop17p"/>
    <property type="match status" value="1"/>
</dbReference>
<dbReference type="PRINTS" id="PR00052">
    <property type="entry name" value="FIBRILLARIN"/>
</dbReference>
<dbReference type="SMART" id="SM01206">
    <property type="entry name" value="Fibrillarin"/>
    <property type="match status" value="1"/>
</dbReference>
<dbReference type="SUPFAM" id="SSF53335">
    <property type="entry name" value="S-adenosyl-L-methionine-dependent methyltransferases"/>
    <property type="match status" value="1"/>
</dbReference>
<dbReference type="PROSITE" id="PS00566">
    <property type="entry name" value="FIBRILLARIN"/>
    <property type="match status" value="1"/>
</dbReference>
<sequence length="210" mass="22891">MTLPSGVERHDFGGETSLATQGQPVYGERTDGDWRRWDPHRSKLGAMLAHGMDTGLGGGETVLYLGAAAGTTVSHVADFGGPTYAVEFAPRPVRELLDAAESRRNLFPLLKDARKPESYAHVVEPVDVVVQDVATRGQARVATLNKQFLTDDGRLLAAIKARSEDVTADPDAVFDSVRAELSAEYELLETARLDPYHEDHLGIVARPRKD</sequence>
<organism>
    <name type="scientific">Haloarcula marismortui (strain ATCC 43049 / DSM 3752 / JCM 8966 / VKM B-1809)</name>
    <name type="common">Halobacterium marismortui</name>
    <dbReference type="NCBI Taxonomy" id="272569"/>
    <lineage>
        <taxon>Archaea</taxon>
        <taxon>Methanobacteriati</taxon>
        <taxon>Methanobacteriota</taxon>
        <taxon>Stenosarchaea group</taxon>
        <taxon>Halobacteria</taxon>
        <taxon>Halobacteriales</taxon>
        <taxon>Haloarculaceae</taxon>
        <taxon>Haloarcula</taxon>
    </lineage>
</organism>
<feature type="chain" id="PRO_0000148530" description="Fibrillarin-like rRNA/tRNA 2'-O-methyltransferase">
    <location>
        <begin position="1"/>
        <end position="210"/>
    </location>
</feature>
<feature type="region of interest" description="Disordered" evidence="2">
    <location>
        <begin position="1"/>
        <end position="34"/>
    </location>
</feature>
<feature type="binding site" evidence="1">
    <location>
        <begin position="71"/>
        <end position="72"/>
    </location>
    <ligand>
        <name>S-adenosyl-L-methionine</name>
        <dbReference type="ChEBI" id="CHEBI:59789"/>
    </ligand>
</feature>
<feature type="binding site" evidence="1">
    <location>
        <begin position="87"/>
        <end position="88"/>
    </location>
    <ligand>
        <name>S-adenosyl-L-methionine</name>
        <dbReference type="ChEBI" id="CHEBI:59789"/>
    </ligand>
</feature>
<feature type="binding site" evidence="1">
    <location>
        <begin position="112"/>
        <end position="113"/>
    </location>
    <ligand>
        <name>S-adenosyl-L-methionine</name>
        <dbReference type="ChEBI" id="CHEBI:59789"/>
    </ligand>
</feature>
<feature type="binding site" evidence="1">
    <location>
        <begin position="132"/>
        <end position="135"/>
    </location>
    <ligand>
        <name>S-adenosyl-L-methionine</name>
        <dbReference type="ChEBI" id="CHEBI:59789"/>
    </ligand>
</feature>